<gene>
    <name type="primary">MT-CYB</name>
    <name type="synonym">COB</name>
    <name type="synonym">CYTB</name>
    <name type="synonym">MTCYB</name>
</gene>
<protein>
    <recommendedName>
        <fullName>Cytochrome b</fullName>
    </recommendedName>
    <alternativeName>
        <fullName>Complex III subunit 3</fullName>
    </alternativeName>
    <alternativeName>
        <fullName>Complex III subunit III</fullName>
    </alternativeName>
    <alternativeName>
        <fullName>Cytochrome b-c1 complex subunit 3</fullName>
    </alternativeName>
    <alternativeName>
        <fullName>Ubiquinol-cytochrome-c reductase complex cytochrome b subunit</fullName>
    </alternativeName>
</protein>
<geneLocation type="mitochondrion"/>
<keyword id="KW-0249">Electron transport</keyword>
<keyword id="KW-0349">Heme</keyword>
<keyword id="KW-0408">Iron</keyword>
<keyword id="KW-0472">Membrane</keyword>
<keyword id="KW-0479">Metal-binding</keyword>
<keyword id="KW-0496">Mitochondrion</keyword>
<keyword id="KW-0999">Mitochondrion inner membrane</keyword>
<keyword id="KW-0679">Respiratory chain</keyword>
<keyword id="KW-0812">Transmembrane</keyword>
<keyword id="KW-1133">Transmembrane helix</keyword>
<keyword id="KW-0813">Transport</keyword>
<keyword id="KW-0830">Ubiquinone</keyword>
<name>CYB_MIRLE</name>
<organism>
    <name type="scientific">Mirounga leonina</name>
    <name type="common">Southern elephant seal</name>
    <name type="synonym">Phoca leonina</name>
    <dbReference type="NCBI Taxonomy" id="9715"/>
    <lineage>
        <taxon>Eukaryota</taxon>
        <taxon>Metazoa</taxon>
        <taxon>Chordata</taxon>
        <taxon>Craniata</taxon>
        <taxon>Vertebrata</taxon>
        <taxon>Euteleostomi</taxon>
        <taxon>Mammalia</taxon>
        <taxon>Eutheria</taxon>
        <taxon>Laurasiatheria</taxon>
        <taxon>Carnivora</taxon>
        <taxon>Caniformia</taxon>
        <taxon>Pinnipedia</taxon>
        <taxon>Phocidae</taxon>
        <taxon>Monachinae</taxon>
        <taxon>Miroungini</taxon>
        <taxon>Mirounga</taxon>
    </lineage>
</organism>
<feature type="chain" id="PRO_0000061194" description="Cytochrome b">
    <location>
        <begin position="1"/>
        <end position="379"/>
    </location>
</feature>
<feature type="transmembrane region" description="Helical" evidence="2">
    <location>
        <begin position="33"/>
        <end position="53"/>
    </location>
</feature>
<feature type="transmembrane region" description="Helical" evidence="2">
    <location>
        <begin position="77"/>
        <end position="98"/>
    </location>
</feature>
<feature type="transmembrane region" description="Helical" evidence="2">
    <location>
        <begin position="113"/>
        <end position="133"/>
    </location>
</feature>
<feature type="transmembrane region" description="Helical" evidence="2">
    <location>
        <begin position="178"/>
        <end position="198"/>
    </location>
</feature>
<feature type="transmembrane region" description="Helical" evidence="2">
    <location>
        <begin position="226"/>
        <end position="246"/>
    </location>
</feature>
<feature type="transmembrane region" description="Helical" evidence="2">
    <location>
        <begin position="288"/>
        <end position="308"/>
    </location>
</feature>
<feature type="transmembrane region" description="Helical" evidence="2">
    <location>
        <begin position="320"/>
        <end position="340"/>
    </location>
</feature>
<feature type="transmembrane region" description="Helical" evidence="2">
    <location>
        <begin position="347"/>
        <end position="367"/>
    </location>
</feature>
<feature type="binding site" description="axial binding residue" evidence="2">
    <location>
        <position position="83"/>
    </location>
    <ligand>
        <name>heme b</name>
        <dbReference type="ChEBI" id="CHEBI:60344"/>
        <label>b562</label>
    </ligand>
    <ligandPart>
        <name>Fe</name>
        <dbReference type="ChEBI" id="CHEBI:18248"/>
    </ligandPart>
</feature>
<feature type="binding site" description="axial binding residue" evidence="2">
    <location>
        <position position="97"/>
    </location>
    <ligand>
        <name>heme b</name>
        <dbReference type="ChEBI" id="CHEBI:60344"/>
        <label>b566</label>
    </ligand>
    <ligandPart>
        <name>Fe</name>
        <dbReference type="ChEBI" id="CHEBI:18248"/>
    </ligandPart>
</feature>
<feature type="binding site" description="axial binding residue" evidence="2">
    <location>
        <position position="182"/>
    </location>
    <ligand>
        <name>heme b</name>
        <dbReference type="ChEBI" id="CHEBI:60344"/>
        <label>b562</label>
    </ligand>
    <ligandPart>
        <name>Fe</name>
        <dbReference type="ChEBI" id="CHEBI:18248"/>
    </ligandPart>
</feature>
<feature type="binding site" description="axial binding residue" evidence="2">
    <location>
        <position position="196"/>
    </location>
    <ligand>
        <name>heme b</name>
        <dbReference type="ChEBI" id="CHEBI:60344"/>
        <label>b566</label>
    </ligand>
    <ligandPart>
        <name>Fe</name>
        <dbReference type="ChEBI" id="CHEBI:18248"/>
    </ligandPart>
</feature>
<feature type="binding site" evidence="2">
    <location>
        <position position="201"/>
    </location>
    <ligand>
        <name>a ubiquinone</name>
        <dbReference type="ChEBI" id="CHEBI:16389"/>
    </ligand>
</feature>
<reference key="1">
    <citation type="journal article" date="1995" name="J. Mol. Evol.">
        <title>A molecular view of pinniped relationships with particular emphasis on the true seals.</title>
        <authorList>
            <person name="Arnason U."/>
            <person name="Bodin K."/>
            <person name="Gullberg A."/>
            <person name="Ledje C."/>
            <person name="Mouchaty S."/>
        </authorList>
    </citation>
    <scope>NUCLEOTIDE SEQUENCE [GENOMIC DNA]</scope>
</reference>
<comment type="function">
    <text evidence="2">Component of the ubiquinol-cytochrome c reductase complex (complex III or cytochrome b-c1 complex) that is part of the mitochondrial respiratory chain. The b-c1 complex mediates electron transfer from ubiquinol to cytochrome c. Contributes to the generation of a proton gradient across the mitochondrial membrane that is then used for ATP synthesis.</text>
</comment>
<comment type="cofactor">
    <cofactor evidence="2">
        <name>heme b</name>
        <dbReference type="ChEBI" id="CHEBI:60344"/>
    </cofactor>
    <text evidence="2">Binds 2 heme b groups non-covalently.</text>
</comment>
<comment type="subunit">
    <text evidence="2">The cytochrome bc1 complex contains 11 subunits: 3 respiratory subunits (MT-CYB, CYC1 and UQCRFS1), 2 core proteins (UQCRC1 and UQCRC2) and 6 low-molecular weight proteins (UQCRH/QCR6, UQCRB/QCR7, UQCRQ/QCR8, UQCR10/QCR9, UQCR11/QCR10 and a cleavage product of UQCRFS1). This cytochrome bc1 complex then forms a dimer.</text>
</comment>
<comment type="subcellular location">
    <subcellularLocation>
        <location evidence="2">Mitochondrion inner membrane</location>
        <topology evidence="2">Multi-pass membrane protein</topology>
    </subcellularLocation>
</comment>
<comment type="miscellaneous">
    <text evidence="1">Heme 1 (or BL or b562) is low-potential and absorbs at about 562 nm, and heme 2 (or BH or b566) is high-potential and absorbs at about 566 nm.</text>
</comment>
<comment type="similarity">
    <text evidence="3 4">Belongs to the cytochrome b family.</text>
</comment>
<comment type="caution">
    <text evidence="2">The full-length protein contains only eight transmembrane helices, not nine as predicted by bioinformatics tools.</text>
</comment>
<evidence type="ECO:0000250" key="1"/>
<evidence type="ECO:0000250" key="2">
    <source>
        <dbReference type="UniProtKB" id="P00157"/>
    </source>
</evidence>
<evidence type="ECO:0000255" key="3">
    <source>
        <dbReference type="PROSITE-ProRule" id="PRU00967"/>
    </source>
</evidence>
<evidence type="ECO:0000255" key="4">
    <source>
        <dbReference type="PROSITE-ProRule" id="PRU00968"/>
    </source>
</evidence>
<proteinExistence type="inferred from homology"/>
<sequence>MTNIRKTHPLAKIINNSFIDLPTPPNISAWWNFGSLLGICLILQILTGLFLAMHYTPDTTTAFSSVTHICRDVNYGWIIRYMHANGASMFFICLYMHMGRGLYYGSYTFTETWNIGIILLFTIMATAFMGYVLPWGQMSFWGATVITNLLSAVPYVGDDLVQWIWGGFSIDKATLTRFFALHFILPFVALALAAVHLLFLHETGSNNPSGIPSDSDKIPFHPYYTIKDILGALLLILTLMLLVLFSPDLLGDPDNYTPANPLSTPPHIKPEWYFLFAYAILRSIPNKLGGVLALILSILILAIIPLLHTSSQRGMMFRPISQCLFWLLVADLLTLTWIGGQPVEHPYIIIGQLASILYFTILLVLMPITSIIENNILKW</sequence>
<accession>Q35019</accession>
<dbReference type="EMBL" id="X82298">
    <property type="protein sequence ID" value="CAA57741.1"/>
    <property type="molecule type" value="Genomic_DNA"/>
</dbReference>
<dbReference type="PIR" id="S58465">
    <property type="entry name" value="S58465"/>
</dbReference>
<dbReference type="SMR" id="Q35019"/>
<dbReference type="GO" id="GO:0005743">
    <property type="term" value="C:mitochondrial inner membrane"/>
    <property type="evidence" value="ECO:0007669"/>
    <property type="project" value="UniProtKB-SubCell"/>
</dbReference>
<dbReference type="GO" id="GO:0045275">
    <property type="term" value="C:respiratory chain complex III"/>
    <property type="evidence" value="ECO:0007669"/>
    <property type="project" value="InterPro"/>
</dbReference>
<dbReference type="GO" id="GO:0046872">
    <property type="term" value="F:metal ion binding"/>
    <property type="evidence" value="ECO:0007669"/>
    <property type="project" value="UniProtKB-KW"/>
</dbReference>
<dbReference type="GO" id="GO:0008121">
    <property type="term" value="F:ubiquinol-cytochrome-c reductase activity"/>
    <property type="evidence" value="ECO:0007669"/>
    <property type="project" value="InterPro"/>
</dbReference>
<dbReference type="GO" id="GO:0006122">
    <property type="term" value="P:mitochondrial electron transport, ubiquinol to cytochrome c"/>
    <property type="evidence" value="ECO:0007669"/>
    <property type="project" value="TreeGrafter"/>
</dbReference>
<dbReference type="CDD" id="cd00290">
    <property type="entry name" value="cytochrome_b_C"/>
    <property type="match status" value="1"/>
</dbReference>
<dbReference type="CDD" id="cd00284">
    <property type="entry name" value="Cytochrome_b_N"/>
    <property type="match status" value="1"/>
</dbReference>
<dbReference type="FunFam" id="1.20.810.10:FF:000002">
    <property type="entry name" value="Cytochrome b"/>
    <property type="match status" value="1"/>
</dbReference>
<dbReference type="Gene3D" id="1.20.810.10">
    <property type="entry name" value="Cytochrome Bc1 Complex, Chain C"/>
    <property type="match status" value="1"/>
</dbReference>
<dbReference type="InterPro" id="IPR005798">
    <property type="entry name" value="Cyt_b/b6_C"/>
</dbReference>
<dbReference type="InterPro" id="IPR036150">
    <property type="entry name" value="Cyt_b/b6_C_sf"/>
</dbReference>
<dbReference type="InterPro" id="IPR005797">
    <property type="entry name" value="Cyt_b/b6_N"/>
</dbReference>
<dbReference type="InterPro" id="IPR027387">
    <property type="entry name" value="Cytb/b6-like_sf"/>
</dbReference>
<dbReference type="InterPro" id="IPR030689">
    <property type="entry name" value="Cytochrome_b"/>
</dbReference>
<dbReference type="InterPro" id="IPR048260">
    <property type="entry name" value="Cytochrome_b_C_euk/bac"/>
</dbReference>
<dbReference type="InterPro" id="IPR048259">
    <property type="entry name" value="Cytochrome_b_N_euk/bac"/>
</dbReference>
<dbReference type="InterPro" id="IPR016174">
    <property type="entry name" value="Di-haem_cyt_TM"/>
</dbReference>
<dbReference type="PANTHER" id="PTHR19271">
    <property type="entry name" value="CYTOCHROME B"/>
    <property type="match status" value="1"/>
</dbReference>
<dbReference type="PANTHER" id="PTHR19271:SF16">
    <property type="entry name" value="CYTOCHROME B"/>
    <property type="match status" value="1"/>
</dbReference>
<dbReference type="Pfam" id="PF00032">
    <property type="entry name" value="Cytochrom_B_C"/>
    <property type="match status" value="1"/>
</dbReference>
<dbReference type="Pfam" id="PF00033">
    <property type="entry name" value="Cytochrome_B"/>
    <property type="match status" value="1"/>
</dbReference>
<dbReference type="PIRSF" id="PIRSF038885">
    <property type="entry name" value="COB"/>
    <property type="match status" value="1"/>
</dbReference>
<dbReference type="SUPFAM" id="SSF81648">
    <property type="entry name" value="a domain/subunit of cytochrome bc1 complex (Ubiquinol-cytochrome c reductase)"/>
    <property type="match status" value="1"/>
</dbReference>
<dbReference type="SUPFAM" id="SSF81342">
    <property type="entry name" value="Transmembrane di-heme cytochromes"/>
    <property type="match status" value="1"/>
</dbReference>
<dbReference type="PROSITE" id="PS51003">
    <property type="entry name" value="CYTB_CTER"/>
    <property type="match status" value="1"/>
</dbReference>
<dbReference type="PROSITE" id="PS51002">
    <property type="entry name" value="CYTB_NTER"/>
    <property type="match status" value="1"/>
</dbReference>